<dbReference type="EC" id="2.7.7.6" evidence="1"/>
<dbReference type="EMBL" id="AF087812">
    <property type="protein sequence ID" value="AAC69338.1"/>
    <property type="molecule type" value="Genomic_DNA"/>
</dbReference>
<dbReference type="EMBL" id="AF101273">
    <property type="protein sequence ID" value="AAC95361.1"/>
    <property type="molecule type" value="Genomic_DNA"/>
</dbReference>
<dbReference type="RefSeq" id="WP_011945543.1">
    <property type="nucleotide sequence ID" value="NZ_UGOL01000001.1"/>
</dbReference>
<dbReference type="SMR" id="O86094"/>
<dbReference type="STRING" id="91892.BIZ52_01895"/>
<dbReference type="eggNOG" id="COG0085">
    <property type="taxonomic scope" value="Bacteria"/>
</dbReference>
<dbReference type="GO" id="GO:0000428">
    <property type="term" value="C:DNA-directed RNA polymerase complex"/>
    <property type="evidence" value="ECO:0007669"/>
    <property type="project" value="UniProtKB-KW"/>
</dbReference>
<dbReference type="GO" id="GO:0003677">
    <property type="term" value="F:DNA binding"/>
    <property type="evidence" value="ECO:0007669"/>
    <property type="project" value="UniProtKB-UniRule"/>
</dbReference>
<dbReference type="GO" id="GO:0003899">
    <property type="term" value="F:DNA-directed RNA polymerase activity"/>
    <property type="evidence" value="ECO:0007669"/>
    <property type="project" value="UniProtKB-UniRule"/>
</dbReference>
<dbReference type="GO" id="GO:0032549">
    <property type="term" value="F:ribonucleoside binding"/>
    <property type="evidence" value="ECO:0007669"/>
    <property type="project" value="InterPro"/>
</dbReference>
<dbReference type="GO" id="GO:0006351">
    <property type="term" value="P:DNA-templated transcription"/>
    <property type="evidence" value="ECO:0007669"/>
    <property type="project" value="UniProtKB-UniRule"/>
</dbReference>
<dbReference type="GO" id="GO:0046677">
    <property type="term" value="P:response to antibiotic"/>
    <property type="evidence" value="ECO:0007669"/>
    <property type="project" value="UniProtKB-KW"/>
</dbReference>
<dbReference type="CDD" id="cd00653">
    <property type="entry name" value="RNA_pol_B_RPB2"/>
    <property type="match status" value="1"/>
</dbReference>
<dbReference type="FunFam" id="2.40.50.100:FF:000006">
    <property type="entry name" value="DNA-directed RNA polymerase subunit beta"/>
    <property type="match status" value="1"/>
</dbReference>
<dbReference type="FunFam" id="2.40.50.150:FF:000001">
    <property type="entry name" value="DNA-directed RNA polymerase subunit beta"/>
    <property type="match status" value="1"/>
</dbReference>
<dbReference type="FunFam" id="3.90.1800.10:FF:000001">
    <property type="entry name" value="DNA-directed RNA polymerase subunit beta"/>
    <property type="match status" value="1"/>
</dbReference>
<dbReference type="Gene3D" id="2.40.50.100">
    <property type="match status" value="1"/>
</dbReference>
<dbReference type="Gene3D" id="2.40.50.150">
    <property type="match status" value="1"/>
</dbReference>
<dbReference type="Gene3D" id="3.90.1100.10">
    <property type="match status" value="2"/>
</dbReference>
<dbReference type="Gene3D" id="2.30.150.10">
    <property type="entry name" value="DNA-directed RNA polymerase, beta subunit, external 1 domain"/>
    <property type="match status" value="1"/>
</dbReference>
<dbReference type="Gene3D" id="2.40.270.10">
    <property type="entry name" value="DNA-directed RNA polymerase, subunit 2, domain 6"/>
    <property type="match status" value="1"/>
</dbReference>
<dbReference type="Gene3D" id="3.90.1800.10">
    <property type="entry name" value="RNA polymerase alpha subunit dimerisation domain"/>
    <property type="match status" value="1"/>
</dbReference>
<dbReference type="Gene3D" id="3.90.1110.10">
    <property type="entry name" value="RNA polymerase Rpb2, domain 2"/>
    <property type="match status" value="1"/>
</dbReference>
<dbReference type="HAMAP" id="MF_01321">
    <property type="entry name" value="RNApol_bact_RpoB"/>
    <property type="match status" value="1"/>
</dbReference>
<dbReference type="InterPro" id="IPR042107">
    <property type="entry name" value="DNA-dir_RNA_pol_bsu_ext_1_sf"/>
</dbReference>
<dbReference type="InterPro" id="IPR019462">
    <property type="entry name" value="DNA-dir_RNA_pol_bsu_external_1"/>
</dbReference>
<dbReference type="InterPro" id="IPR015712">
    <property type="entry name" value="DNA-dir_RNA_pol_su2"/>
</dbReference>
<dbReference type="InterPro" id="IPR007120">
    <property type="entry name" value="DNA-dir_RNAP_su2_dom"/>
</dbReference>
<dbReference type="InterPro" id="IPR037033">
    <property type="entry name" value="DNA-dir_RNAP_su2_hyb_sf"/>
</dbReference>
<dbReference type="InterPro" id="IPR010243">
    <property type="entry name" value="RNA_pol_bsu_bac"/>
</dbReference>
<dbReference type="InterPro" id="IPR007121">
    <property type="entry name" value="RNA_pol_bsu_CS"/>
</dbReference>
<dbReference type="InterPro" id="IPR007644">
    <property type="entry name" value="RNA_pol_bsu_protrusion"/>
</dbReference>
<dbReference type="InterPro" id="IPR007642">
    <property type="entry name" value="RNA_pol_Rpb2_2"/>
</dbReference>
<dbReference type="InterPro" id="IPR037034">
    <property type="entry name" value="RNA_pol_Rpb2_2_sf"/>
</dbReference>
<dbReference type="InterPro" id="IPR007645">
    <property type="entry name" value="RNA_pol_Rpb2_3"/>
</dbReference>
<dbReference type="InterPro" id="IPR007641">
    <property type="entry name" value="RNA_pol_Rpb2_7"/>
</dbReference>
<dbReference type="InterPro" id="IPR014724">
    <property type="entry name" value="RNA_pol_RPB2_OB-fold"/>
</dbReference>
<dbReference type="NCBIfam" id="NF001616">
    <property type="entry name" value="PRK00405.1"/>
    <property type="match status" value="1"/>
</dbReference>
<dbReference type="NCBIfam" id="TIGR02013">
    <property type="entry name" value="rpoB"/>
    <property type="match status" value="1"/>
</dbReference>
<dbReference type="PANTHER" id="PTHR20856">
    <property type="entry name" value="DNA-DIRECTED RNA POLYMERASE I SUBUNIT 2"/>
    <property type="match status" value="1"/>
</dbReference>
<dbReference type="Pfam" id="PF04563">
    <property type="entry name" value="RNA_pol_Rpb2_1"/>
    <property type="match status" value="1"/>
</dbReference>
<dbReference type="Pfam" id="PF04561">
    <property type="entry name" value="RNA_pol_Rpb2_2"/>
    <property type="match status" value="2"/>
</dbReference>
<dbReference type="Pfam" id="PF04565">
    <property type="entry name" value="RNA_pol_Rpb2_3"/>
    <property type="match status" value="1"/>
</dbReference>
<dbReference type="Pfam" id="PF10385">
    <property type="entry name" value="RNA_pol_Rpb2_45"/>
    <property type="match status" value="1"/>
</dbReference>
<dbReference type="Pfam" id="PF00562">
    <property type="entry name" value="RNA_pol_Rpb2_6"/>
    <property type="match status" value="1"/>
</dbReference>
<dbReference type="Pfam" id="PF04560">
    <property type="entry name" value="RNA_pol_Rpb2_7"/>
    <property type="match status" value="1"/>
</dbReference>
<dbReference type="SUPFAM" id="SSF64484">
    <property type="entry name" value="beta and beta-prime subunits of DNA dependent RNA-polymerase"/>
    <property type="match status" value="1"/>
</dbReference>
<dbReference type="PROSITE" id="PS01166">
    <property type="entry name" value="RNA_POL_BETA"/>
    <property type="match status" value="1"/>
</dbReference>
<reference key="1">
    <citation type="journal article" date="2000" name="Antimicrob. Agents Chemother.">
        <title>Sequencing of the rpoB gene in Legionella pneumophila and characterization of mutations associated with rifampin resistance in the Legionellaceae.</title>
        <authorList>
            <person name="Nielsen K."/>
            <person name="Hindersson P."/>
            <person name="Hoeiby N."/>
            <person name="Bangsborg J.M."/>
        </authorList>
    </citation>
    <scope>NUCLEOTIDE SEQUENCE [GENOMIC DNA]</scope>
    <scope>VARIANTS RIFAMPICIN RESISTANT</scope>
    <source>
        <strain>K69</strain>
        <strain>K91</strain>
    </source>
</reference>
<feature type="chain" id="PRO_0000047909" description="DNA-directed RNA polymerase subunit beta">
    <location>
        <begin position="1"/>
        <end position="1368"/>
    </location>
</feature>
<feature type="sequence variant" description="In strain: K69 / isolate 8844 and K91 /isolate 8756; rifampicin resistant.">
    <original>S</original>
    <variation>P</variation>
    <location>
        <position position="537"/>
    </location>
</feature>
<feature type="sequence variant" description="In strain: K69 / isolate 8751, K69 / isolate 8752, K69 / isolate 8840-43 and K69 / isolate 8845-49; rifampicin resistant.">
    <original>H</original>
    <variation>Y</variation>
    <location>
        <position position="541"/>
    </location>
</feature>
<feature type="sequence variant" description="In strain: K91 / isolate 8755; rifampicin resistant.">
    <original>R</original>
    <variation>H</variation>
    <location>
        <position position="544"/>
    </location>
</feature>
<comment type="function">
    <text evidence="1">DNA-dependent RNA polymerase catalyzes the transcription of DNA into RNA using the four ribonucleoside triphosphates as substrates.</text>
</comment>
<comment type="catalytic activity">
    <reaction evidence="1">
        <text>RNA(n) + a ribonucleoside 5'-triphosphate = RNA(n+1) + diphosphate</text>
        <dbReference type="Rhea" id="RHEA:21248"/>
        <dbReference type="Rhea" id="RHEA-COMP:14527"/>
        <dbReference type="Rhea" id="RHEA-COMP:17342"/>
        <dbReference type="ChEBI" id="CHEBI:33019"/>
        <dbReference type="ChEBI" id="CHEBI:61557"/>
        <dbReference type="ChEBI" id="CHEBI:140395"/>
        <dbReference type="EC" id="2.7.7.6"/>
    </reaction>
</comment>
<comment type="subunit">
    <text evidence="1">The RNAP catalytic core consists of 2 alpha, 1 beta, 1 beta' and 1 omega subunit. When a sigma factor is associated with the core the holoenzyme is formed, which can initiate transcription.</text>
</comment>
<comment type="similarity">
    <text evidence="1">Belongs to the RNA polymerase beta chain family.</text>
</comment>
<sequence length="1368" mass="152752">MAVAEAKPQYSHAEKKRFRKSFGKQTDIMPIPNLLEIQLKSYRDFLQTDTKLSEQLNTGLHAAFSSVFPIESFSGNARLEYVGYKLGEPAFDVRECKLRGLTYSAPLRVKIRLVVLDKDASDDPKPIKDIREQDVFMGEIPLMTDVGTFVVNGTERVVVSQLHRSPGVIFEHDKGKTHSSGKLLYSARIIPYRGSWLDFEFDPKDCVYVRIDRRRKLPVTILLRALGYEAEDILSEFFETTRCHLKNGEYHIDLIPQRLRGEIASFDIHVPETGELIVEQGRRITARHIKQMEKSQMQDLVVPRDYLIGKTLAKNIIDTSTGEFLAQANDEITEELLDAMANHGILQIDMIYTNDLDHGSYISDTLKIDPTGSQLEALVEIYRMMRPGEPPTKEAAEALFKNLFFVEERYDLSAVGRMKFNRRVGIKSDEGPGTLTKEDILSVIKTLIDIRNGIGMVDDIDHLGNRRVRSVGEMTENQFRVGLVRVERAVKERLSLVESENLMPQDLINAKPVSAAIKEFFGSSQLSQFMDQVNPLSGVTHKRRVSALGPGGLTRERAGFEVRDVHTTHYGRVCPIETPEGPNIGLINSLSVYARTNEYGFIETPCRKVVNGRVTDEVEYLSAIEEVDQYIAQSNVELDAQGNILADLVPCRHQNEFSLTTPDKINYMDVSPKQIVSVAASLIPFLEHDDANRALMGSNMQRQAVPTLRSEKPLVGTGMERIVASDSGVSVVAKRGGVIDLVDASRIVVRVNDDETTAGETGVDIYNLTKYFRSNQDTCINQRPIVSTGDRIQRGDVLADGPCTDMGELALGQNLLVAFMPWNGYNFEDSILISERIVHDDRFTTIHIEELTCIARDTKLGTEEITADIPNVGESALSNLDESGVVYIGAEVKAGDILVGKVTPKGETQLTPEEKLLRAIFGEKASDVKDSSLRVPSGMNGTVIDVQVFTRDGLEKDARAKSIEEEHLARVRKDLIDERRIREEDIYHRVSHLLLDKVATGGPGSLKPGSKITQDYLDKVEREKWFDIRIEDDAVSQQLEQLSKQLELLTKEMEKRFNDSRKKIIQGDDLAPGVLKIVKVYLAVKRRIQPGDKMAGRHGNKGVISIVVPVEDMPHMEDGTAVDIVLNPLGVPSRMNIGQVLETHLGLAAKGLGRKIAQMLDERQTPEAIKAYLEKIYNHDGVQRVNLKCLNDDELMTLADNLRAGVPMATPVFDGATEQEIKSMLQLADLPADGKTVLIDGRTGNKFDNPVTVGYMYMLKLNHLVDDKMHARSTGSYSLVTQQPLGGKAQFGGQRFGEMEVWALEAYGAAYTLQEMLTVKSDDVGGRTKIYKNIVDGDHRMDPGMPESFNVLLKEIRALGIDIELEHD</sequence>
<protein>
    <recommendedName>
        <fullName evidence="1">DNA-directed RNA polymerase subunit beta</fullName>
        <shortName evidence="1">RNAP subunit beta</shortName>
        <ecNumber evidence="1">2.7.7.6</ecNumber>
    </recommendedName>
    <alternativeName>
        <fullName evidence="1">RNA polymerase subunit beta</fullName>
    </alternativeName>
    <alternativeName>
        <fullName evidence="1">Transcriptase subunit beta</fullName>
    </alternativeName>
</protein>
<evidence type="ECO:0000255" key="1">
    <source>
        <dbReference type="HAMAP-Rule" id="MF_01321"/>
    </source>
</evidence>
<keyword id="KW-0046">Antibiotic resistance</keyword>
<keyword id="KW-0240">DNA-directed RNA polymerase</keyword>
<keyword id="KW-0548">Nucleotidyltransferase</keyword>
<keyword id="KW-0804">Transcription</keyword>
<keyword id="KW-0808">Transferase</keyword>
<name>RPOB_LEGPN</name>
<accession>O86094</accession>
<organism>
    <name type="scientific">Legionella pneumophila</name>
    <dbReference type="NCBI Taxonomy" id="446"/>
    <lineage>
        <taxon>Bacteria</taxon>
        <taxon>Pseudomonadati</taxon>
        <taxon>Pseudomonadota</taxon>
        <taxon>Gammaproteobacteria</taxon>
        <taxon>Legionellales</taxon>
        <taxon>Legionellaceae</taxon>
        <taxon>Legionella</taxon>
    </lineage>
</organism>
<gene>
    <name evidence="1" type="primary">rpoB</name>
</gene>
<proteinExistence type="inferred from homology"/>